<comment type="function">
    <text evidence="1">DNA repair enzyme involved in the repair of deaminated bases. Selectively cleaves double-stranded DNA at the second phosphodiester bond 3' to a deoxyinosine leaving behind the intact lesion on the nicked DNA.</text>
</comment>
<comment type="catalytic activity">
    <reaction evidence="1">
        <text>Endonucleolytic cleavage at apurinic or apyrimidinic sites to products with a 5'-phosphate.</text>
        <dbReference type="EC" id="3.1.21.7"/>
    </reaction>
</comment>
<comment type="cofactor">
    <cofactor evidence="1">
        <name>Mg(2+)</name>
        <dbReference type="ChEBI" id="CHEBI:18420"/>
    </cofactor>
</comment>
<comment type="subcellular location">
    <subcellularLocation>
        <location evidence="1">Cytoplasm</location>
    </subcellularLocation>
</comment>
<comment type="similarity">
    <text evidence="1">Belongs to the endonuclease V family.</text>
</comment>
<keyword id="KW-0963">Cytoplasm</keyword>
<keyword id="KW-0227">DNA damage</keyword>
<keyword id="KW-0234">DNA repair</keyword>
<keyword id="KW-0255">Endonuclease</keyword>
<keyword id="KW-0378">Hydrolase</keyword>
<keyword id="KW-0460">Magnesium</keyword>
<keyword id="KW-0479">Metal-binding</keyword>
<keyword id="KW-0540">Nuclease</keyword>
<keyword id="KW-1185">Reference proteome</keyword>
<reference key="1">
    <citation type="journal article" date="2002" name="Nucleic Acids Res.">
        <title>Genome sequence of Shigella flexneri 2a: insights into pathogenicity through comparison with genomes of Escherichia coli K12 and O157.</title>
        <authorList>
            <person name="Jin Q."/>
            <person name="Yuan Z."/>
            <person name="Xu J."/>
            <person name="Wang Y."/>
            <person name="Shen Y."/>
            <person name="Lu W."/>
            <person name="Wang J."/>
            <person name="Liu H."/>
            <person name="Yang J."/>
            <person name="Yang F."/>
            <person name="Zhang X."/>
            <person name="Zhang J."/>
            <person name="Yang G."/>
            <person name="Wu H."/>
            <person name="Qu D."/>
            <person name="Dong J."/>
            <person name="Sun L."/>
            <person name="Xue Y."/>
            <person name="Zhao A."/>
            <person name="Gao Y."/>
            <person name="Zhu J."/>
            <person name="Kan B."/>
            <person name="Ding K."/>
            <person name="Chen S."/>
            <person name="Cheng H."/>
            <person name="Yao Z."/>
            <person name="He B."/>
            <person name="Chen R."/>
            <person name="Ma D."/>
            <person name="Qiang B."/>
            <person name="Wen Y."/>
            <person name="Hou Y."/>
            <person name="Yu J."/>
        </authorList>
    </citation>
    <scope>NUCLEOTIDE SEQUENCE [LARGE SCALE GENOMIC DNA]</scope>
    <source>
        <strain>301 / Serotype 2a</strain>
    </source>
</reference>
<reference key="2">
    <citation type="journal article" date="2003" name="Infect. Immun.">
        <title>Complete genome sequence and comparative genomics of Shigella flexneri serotype 2a strain 2457T.</title>
        <authorList>
            <person name="Wei J."/>
            <person name="Goldberg M.B."/>
            <person name="Burland V."/>
            <person name="Venkatesan M.M."/>
            <person name="Deng W."/>
            <person name="Fournier G."/>
            <person name="Mayhew G.F."/>
            <person name="Plunkett G. III"/>
            <person name="Rose D.J."/>
            <person name="Darling A."/>
            <person name="Mau B."/>
            <person name="Perna N.T."/>
            <person name="Payne S.M."/>
            <person name="Runyen-Janecky L.J."/>
            <person name="Zhou S."/>
            <person name="Schwartz D.C."/>
            <person name="Blattner F.R."/>
        </authorList>
    </citation>
    <scope>NUCLEOTIDE SEQUENCE [LARGE SCALE GENOMIC DNA]</scope>
    <source>
        <strain>ATCC 700930 / 2457T / Serotype 2a</strain>
    </source>
</reference>
<dbReference type="EC" id="3.1.21.7" evidence="1"/>
<dbReference type="EMBL" id="AE005674">
    <property type="protein sequence ID" value="AAN45499.1"/>
    <property type="molecule type" value="Genomic_DNA"/>
</dbReference>
<dbReference type="EMBL" id="AE014073">
    <property type="protein sequence ID" value="AAP18702.1"/>
    <property type="molecule type" value="Genomic_DNA"/>
</dbReference>
<dbReference type="RefSeq" id="NP_709792.1">
    <property type="nucleotide sequence ID" value="NC_004337.2"/>
</dbReference>
<dbReference type="RefSeq" id="WP_000362374.1">
    <property type="nucleotide sequence ID" value="NZ_WPGW01000040.1"/>
</dbReference>
<dbReference type="SMR" id="Q83MJ0"/>
<dbReference type="STRING" id="198214.SF4070"/>
<dbReference type="PaxDb" id="198214-SF4070"/>
<dbReference type="GeneID" id="1027513"/>
<dbReference type="KEGG" id="sfl:SF4070"/>
<dbReference type="KEGG" id="sfx:S3665"/>
<dbReference type="PATRIC" id="fig|198214.7.peg.4794"/>
<dbReference type="HOGENOM" id="CLU_047631_1_0_6"/>
<dbReference type="Proteomes" id="UP000001006">
    <property type="component" value="Chromosome"/>
</dbReference>
<dbReference type="Proteomes" id="UP000002673">
    <property type="component" value="Chromosome"/>
</dbReference>
<dbReference type="GO" id="GO:0005737">
    <property type="term" value="C:cytoplasm"/>
    <property type="evidence" value="ECO:0007669"/>
    <property type="project" value="UniProtKB-SubCell"/>
</dbReference>
<dbReference type="GO" id="GO:0043737">
    <property type="term" value="F:deoxyribonuclease V activity"/>
    <property type="evidence" value="ECO:0007669"/>
    <property type="project" value="UniProtKB-UniRule"/>
</dbReference>
<dbReference type="GO" id="GO:0000287">
    <property type="term" value="F:magnesium ion binding"/>
    <property type="evidence" value="ECO:0007669"/>
    <property type="project" value="UniProtKB-UniRule"/>
</dbReference>
<dbReference type="GO" id="GO:0016891">
    <property type="term" value="F:RNA endonuclease activity, producing 5'-phosphomonoesters"/>
    <property type="evidence" value="ECO:0007669"/>
    <property type="project" value="TreeGrafter"/>
</dbReference>
<dbReference type="GO" id="GO:0003727">
    <property type="term" value="F:single-stranded RNA binding"/>
    <property type="evidence" value="ECO:0007669"/>
    <property type="project" value="TreeGrafter"/>
</dbReference>
<dbReference type="GO" id="GO:0006281">
    <property type="term" value="P:DNA repair"/>
    <property type="evidence" value="ECO:0007669"/>
    <property type="project" value="UniProtKB-UniRule"/>
</dbReference>
<dbReference type="CDD" id="cd06559">
    <property type="entry name" value="Endonuclease_V"/>
    <property type="match status" value="1"/>
</dbReference>
<dbReference type="FunFam" id="3.30.2170.10:FF:000001">
    <property type="entry name" value="Endonuclease V"/>
    <property type="match status" value="1"/>
</dbReference>
<dbReference type="Gene3D" id="3.30.2170.10">
    <property type="entry name" value="archaeoglobus fulgidus dsm 4304 superfamily"/>
    <property type="match status" value="1"/>
</dbReference>
<dbReference type="HAMAP" id="MF_00801">
    <property type="entry name" value="Endonuclease_5"/>
    <property type="match status" value="1"/>
</dbReference>
<dbReference type="InterPro" id="IPR007581">
    <property type="entry name" value="Endonuclease-V"/>
</dbReference>
<dbReference type="NCBIfam" id="NF008629">
    <property type="entry name" value="PRK11617.1"/>
    <property type="match status" value="1"/>
</dbReference>
<dbReference type="PANTHER" id="PTHR28511">
    <property type="entry name" value="ENDONUCLEASE V"/>
    <property type="match status" value="1"/>
</dbReference>
<dbReference type="PANTHER" id="PTHR28511:SF1">
    <property type="entry name" value="ENDONUCLEASE V"/>
    <property type="match status" value="1"/>
</dbReference>
<dbReference type="Pfam" id="PF04493">
    <property type="entry name" value="Endonuclease_5"/>
    <property type="match status" value="1"/>
</dbReference>
<gene>
    <name evidence="1" type="primary">nfi</name>
    <name type="ordered locus">SF4070</name>
    <name type="ordered locus">S3665</name>
</gene>
<evidence type="ECO:0000255" key="1">
    <source>
        <dbReference type="HAMAP-Rule" id="MF_00801"/>
    </source>
</evidence>
<proteinExistence type="inferred from homology"/>
<organism>
    <name type="scientific">Shigella flexneri</name>
    <dbReference type="NCBI Taxonomy" id="623"/>
    <lineage>
        <taxon>Bacteria</taxon>
        <taxon>Pseudomonadati</taxon>
        <taxon>Pseudomonadota</taxon>
        <taxon>Gammaproteobacteria</taxon>
        <taxon>Enterobacterales</taxon>
        <taxon>Enterobacteriaceae</taxon>
        <taxon>Shigella</taxon>
    </lineage>
</organism>
<feature type="chain" id="PRO_0000159671" description="Endonuclease V">
    <location>
        <begin position="1"/>
        <end position="223"/>
    </location>
</feature>
<feature type="binding site" evidence="1">
    <location>
        <position position="35"/>
    </location>
    <ligand>
        <name>Mg(2+)</name>
        <dbReference type="ChEBI" id="CHEBI:18420"/>
    </ligand>
</feature>
<feature type="binding site" evidence="1">
    <location>
        <position position="103"/>
    </location>
    <ligand>
        <name>Mg(2+)</name>
        <dbReference type="ChEBI" id="CHEBI:18420"/>
    </ligand>
</feature>
<feature type="site" description="Interaction with target DNA" evidence="1">
    <location>
        <position position="73"/>
    </location>
</feature>
<sequence>MDLASLRAQQIELASSVICEDRLDKDPPDLIAGADVGFEQGGEVTRAAMVLLKYPSLELVEYKVARIATTMPYIPGFLSFREYPALLAAWEMLSQKPDLVFVDGHGISHPRRLGVASHFGLLVDVPTIGVAKKRLCGKFEPLSSKPGALAPLMDKGEQLAWVWRSKARCNPLFIATGHRVSVDSALAWVQRCMKGYRLPEPTRWADAVASERPAFVRYTANQP</sequence>
<name>NFI_SHIFL</name>
<accession>Q83MJ0</accession>
<accession>Q7BZH9</accession>
<protein>
    <recommendedName>
        <fullName evidence="1">Endonuclease V</fullName>
        <ecNumber evidence="1">3.1.21.7</ecNumber>
    </recommendedName>
    <alternativeName>
        <fullName evidence="1">Deoxyinosine 3'endonuclease</fullName>
    </alternativeName>
    <alternativeName>
        <fullName evidence="1">Deoxyribonuclease V</fullName>
        <shortName evidence="1">DNase V</shortName>
    </alternativeName>
</protein>